<sequence>MRKYEIMYIIRPGVEEEAQKALVERFAGVLTNNGAEIINTKEWGKRRLAYEINDLREGFYMILNVNANAEAINEFDRLAKINEDILRHIVVKEEEK</sequence>
<feature type="chain" id="PRO_1000133507" description="Small ribosomal subunit protein bS6">
    <location>
        <begin position="1"/>
        <end position="96"/>
    </location>
</feature>
<evidence type="ECO:0000255" key="1">
    <source>
        <dbReference type="HAMAP-Rule" id="MF_00360"/>
    </source>
</evidence>
<evidence type="ECO:0000305" key="2"/>
<keyword id="KW-0687">Ribonucleoprotein</keyword>
<keyword id="KW-0689">Ribosomal protein</keyword>
<keyword id="KW-0694">RNA-binding</keyword>
<keyword id="KW-0699">rRNA-binding</keyword>
<reference key="1">
    <citation type="submission" date="2009-04" db="EMBL/GenBank/DDBJ databases">
        <title>Genome sequence of Bacillus anthracis A0248.</title>
        <authorList>
            <person name="Dodson R.J."/>
            <person name="Munk A.C."/>
            <person name="Bruce D."/>
            <person name="Detter C."/>
            <person name="Tapia R."/>
            <person name="Sutton G."/>
            <person name="Sims D."/>
            <person name="Brettin T."/>
        </authorList>
    </citation>
    <scope>NUCLEOTIDE SEQUENCE [LARGE SCALE GENOMIC DNA]</scope>
    <source>
        <strain>A0248</strain>
    </source>
</reference>
<proteinExistence type="inferred from homology"/>
<protein>
    <recommendedName>
        <fullName evidence="1">Small ribosomal subunit protein bS6</fullName>
    </recommendedName>
    <alternativeName>
        <fullName evidence="2">30S ribosomal protein S6</fullName>
    </alternativeName>
</protein>
<gene>
    <name evidence="1" type="primary">rpsF</name>
    <name type="ordered locus">BAA_5758</name>
</gene>
<organism>
    <name type="scientific">Bacillus anthracis (strain A0248)</name>
    <dbReference type="NCBI Taxonomy" id="592021"/>
    <lineage>
        <taxon>Bacteria</taxon>
        <taxon>Bacillati</taxon>
        <taxon>Bacillota</taxon>
        <taxon>Bacilli</taxon>
        <taxon>Bacillales</taxon>
        <taxon>Bacillaceae</taxon>
        <taxon>Bacillus</taxon>
        <taxon>Bacillus cereus group</taxon>
    </lineage>
</organism>
<accession>C3P3E5</accession>
<dbReference type="EMBL" id="CP001598">
    <property type="protein sequence ID" value="ACQ49021.1"/>
    <property type="molecule type" value="Genomic_DNA"/>
</dbReference>
<dbReference type="RefSeq" id="WP_001233779.1">
    <property type="nucleotide sequence ID" value="NC_012659.1"/>
</dbReference>
<dbReference type="SMR" id="C3P3E5"/>
<dbReference type="GeneID" id="75088663"/>
<dbReference type="KEGG" id="bai:BAA_5758"/>
<dbReference type="HOGENOM" id="CLU_113441_5_3_9"/>
<dbReference type="GO" id="GO:0005737">
    <property type="term" value="C:cytoplasm"/>
    <property type="evidence" value="ECO:0007669"/>
    <property type="project" value="UniProtKB-ARBA"/>
</dbReference>
<dbReference type="GO" id="GO:1990904">
    <property type="term" value="C:ribonucleoprotein complex"/>
    <property type="evidence" value="ECO:0007669"/>
    <property type="project" value="UniProtKB-KW"/>
</dbReference>
<dbReference type="GO" id="GO:0005840">
    <property type="term" value="C:ribosome"/>
    <property type="evidence" value="ECO:0007669"/>
    <property type="project" value="UniProtKB-KW"/>
</dbReference>
<dbReference type="GO" id="GO:0070181">
    <property type="term" value="F:small ribosomal subunit rRNA binding"/>
    <property type="evidence" value="ECO:0007669"/>
    <property type="project" value="TreeGrafter"/>
</dbReference>
<dbReference type="GO" id="GO:0003735">
    <property type="term" value="F:structural constituent of ribosome"/>
    <property type="evidence" value="ECO:0007669"/>
    <property type="project" value="InterPro"/>
</dbReference>
<dbReference type="GO" id="GO:0006412">
    <property type="term" value="P:translation"/>
    <property type="evidence" value="ECO:0007669"/>
    <property type="project" value="UniProtKB-UniRule"/>
</dbReference>
<dbReference type="CDD" id="cd00473">
    <property type="entry name" value="bS6"/>
    <property type="match status" value="1"/>
</dbReference>
<dbReference type="FunFam" id="3.30.70.60:FF:000002">
    <property type="entry name" value="30S ribosomal protein S6"/>
    <property type="match status" value="1"/>
</dbReference>
<dbReference type="Gene3D" id="3.30.70.60">
    <property type="match status" value="1"/>
</dbReference>
<dbReference type="HAMAP" id="MF_00360">
    <property type="entry name" value="Ribosomal_bS6"/>
    <property type="match status" value="1"/>
</dbReference>
<dbReference type="InterPro" id="IPR000529">
    <property type="entry name" value="Ribosomal_bS6"/>
</dbReference>
<dbReference type="InterPro" id="IPR020815">
    <property type="entry name" value="Ribosomal_bS6_CS"/>
</dbReference>
<dbReference type="InterPro" id="IPR035980">
    <property type="entry name" value="Ribosomal_bS6_sf"/>
</dbReference>
<dbReference type="InterPro" id="IPR020814">
    <property type="entry name" value="Ribosomal_S6_plastid/chlpt"/>
</dbReference>
<dbReference type="InterPro" id="IPR014717">
    <property type="entry name" value="Transl_elong_EF1B/ribsomal_bS6"/>
</dbReference>
<dbReference type="NCBIfam" id="TIGR00166">
    <property type="entry name" value="S6"/>
    <property type="match status" value="1"/>
</dbReference>
<dbReference type="PANTHER" id="PTHR21011">
    <property type="entry name" value="MITOCHONDRIAL 28S RIBOSOMAL PROTEIN S6"/>
    <property type="match status" value="1"/>
</dbReference>
<dbReference type="PANTHER" id="PTHR21011:SF1">
    <property type="entry name" value="SMALL RIBOSOMAL SUBUNIT PROTEIN BS6M"/>
    <property type="match status" value="1"/>
</dbReference>
<dbReference type="Pfam" id="PF01250">
    <property type="entry name" value="Ribosomal_S6"/>
    <property type="match status" value="1"/>
</dbReference>
<dbReference type="SUPFAM" id="SSF54995">
    <property type="entry name" value="Ribosomal protein S6"/>
    <property type="match status" value="1"/>
</dbReference>
<dbReference type="PROSITE" id="PS01048">
    <property type="entry name" value="RIBOSOMAL_S6"/>
    <property type="match status" value="1"/>
</dbReference>
<comment type="function">
    <text evidence="1">Binds together with bS18 to 16S ribosomal RNA.</text>
</comment>
<comment type="similarity">
    <text evidence="1">Belongs to the bacterial ribosomal protein bS6 family.</text>
</comment>
<name>RS6_BACAA</name>